<sequence length="582" mass="64561">MESVKQRILAPGKEGIKNFAGKSLGQIYRVLEKKQDNRETIELTEDGKPLEVPEKKAPLCDCTCFGLPRRYIIAIMSGLGFCISFGIRCNLGVAIVDMVNNSTIHRGGKVIKEKAKFNWDPETVGMIHGSFFWGYIITQIPGGYIASRLAANRVFGAAILLTSTLNMLIPSAARVHYGCVIFVRILQGLVEGVTYPACHGIWSKWAPPLERSRLATTSFCGSYAGAVIAMPLAGILVQYTGWSSVFYVYGSFGMVWYMFWLLVSYESPAKHPTITDEERRYIEESIGESANLLGAMEKFKTPWRKFFTSMPVYAIIVANFCRSWTFYLLLISQPAYFEEVFGFEISKVGMLSAVPHLVMTIIVPIGGQIADFLRSKQILSTTTVRKIMNCGGFGMEATLLLVVGYSHTRGVAISFLVLAVGFSGFAISGFNVNHLDIAPRYASILMGISDGVGTLSGMVCPIIVGAMTKNKSREEWQYVFLIAALVHYGGVIFYALFASGEKQPWADPEETSEEKCGFIHEDELDEETGDITQNYINYGTTKSYGATSQENGGWPNGWEKKEEFVQEGAQDAYTYKDRDDYS</sequence>
<reference key="1">
    <citation type="journal article" date="2001" name="J. Biol. Chem.">
        <title>Molecular and functional analysis of a novel neuronal vesicular glutamate transporter.</title>
        <authorList>
            <person name="Bai L."/>
            <person name="Xu H."/>
            <person name="Collins J.F."/>
            <person name="Ghishan F.K."/>
        </authorList>
    </citation>
    <scope>NUCLEOTIDE SEQUENCE [MRNA]</scope>
    <scope>FUNCTION</scope>
    <scope>TRANSPORTER ACTIVITY</scope>
    <scope>ACTIVITY REGULATION</scope>
    <scope>BIOPHYSICOCHEMICAL PROPERTIES</scope>
    <scope>TISSUE SPECIFICITY</scope>
</reference>
<reference key="2">
    <citation type="journal article" date="2005" name="Science">
        <title>The transcriptional landscape of the mammalian genome.</title>
        <authorList>
            <person name="Carninci P."/>
            <person name="Kasukawa T."/>
            <person name="Katayama S."/>
            <person name="Gough J."/>
            <person name="Frith M.C."/>
            <person name="Maeda N."/>
            <person name="Oyama R."/>
            <person name="Ravasi T."/>
            <person name="Lenhard B."/>
            <person name="Wells C."/>
            <person name="Kodzius R."/>
            <person name="Shimokawa K."/>
            <person name="Bajic V.B."/>
            <person name="Brenner S.E."/>
            <person name="Batalov S."/>
            <person name="Forrest A.R."/>
            <person name="Zavolan M."/>
            <person name="Davis M.J."/>
            <person name="Wilming L.G."/>
            <person name="Aidinis V."/>
            <person name="Allen J.E."/>
            <person name="Ambesi-Impiombato A."/>
            <person name="Apweiler R."/>
            <person name="Aturaliya R.N."/>
            <person name="Bailey T.L."/>
            <person name="Bansal M."/>
            <person name="Baxter L."/>
            <person name="Beisel K.W."/>
            <person name="Bersano T."/>
            <person name="Bono H."/>
            <person name="Chalk A.M."/>
            <person name="Chiu K.P."/>
            <person name="Choudhary V."/>
            <person name="Christoffels A."/>
            <person name="Clutterbuck D.R."/>
            <person name="Crowe M.L."/>
            <person name="Dalla E."/>
            <person name="Dalrymple B.P."/>
            <person name="de Bono B."/>
            <person name="Della Gatta G."/>
            <person name="di Bernardo D."/>
            <person name="Down T."/>
            <person name="Engstrom P."/>
            <person name="Fagiolini M."/>
            <person name="Faulkner G."/>
            <person name="Fletcher C.F."/>
            <person name="Fukushima T."/>
            <person name="Furuno M."/>
            <person name="Futaki S."/>
            <person name="Gariboldi M."/>
            <person name="Georgii-Hemming P."/>
            <person name="Gingeras T.R."/>
            <person name="Gojobori T."/>
            <person name="Green R.E."/>
            <person name="Gustincich S."/>
            <person name="Harbers M."/>
            <person name="Hayashi Y."/>
            <person name="Hensch T.K."/>
            <person name="Hirokawa N."/>
            <person name="Hill D."/>
            <person name="Huminiecki L."/>
            <person name="Iacono M."/>
            <person name="Ikeo K."/>
            <person name="Iwama A."/>
            <person name="Ishikawa T."/>
            <person name="Jakt M."/>
            <person name="Kanapin A."/>
            <person name="Katoh M."/>
            <person name="Kawasawa Y."/>
            <person name="Kelso J."/>
            <person name="Kitamura H."/>
            <person name="Kitano H."/>
            <person name="Kollias G."/>
            <person name="Krishnan S.P."/>
            <person name="Kruger A."/>
            <person name="Kummerfeld S.K."/>
            <person name="Kurochkin I.V."/>
            <person name="Lareau L.F."/>
            <person name="Lazarevic D."/>
            <person name="Lipovich L."/>
            <person name="Liu J."/>
            <person name="Liuni S."/>
            <person name="McWilliam S."/>
            <person name="Madan Babu M."/>
            <person name="Madera M."/>
            <person name="Marchionni L."/>
            <person name="Matsuda H."/>
            <person name="Matsuzawa S."/>
            <person name="Miki H."/>
            <person name="Mignone F."/>
            <person name="Miyake S."/>
            <person name="Morris K."/>
            <person name="Mottagui-Tabar S."/>
            <person name="Mulder N."/>
            <person name="Nakano N."/>
            <person name="Nakauchi H."/>
            <person name="Ng P."/>
            <person name="Nilsson R."/>
            <person name="Nishiguchi S."/>
            <person name="Nishikawa S."/>
            <person name="Nori F."/>
            <person name="Ohara O."/>
            <person name="Okazaki Y."/>
            <person name="Orlando V."/>
            <person name="Pang K.C."/>
            <person name="Pavan W.J."/>
            <person name="Pavesi G."/>
            <person name="Pesole G."/>
            <person name="Petrovsky N."/>
            <person name="Piazza S."/>
            <person name="Reed J."/>
            <person name="Reid J.F."/>
            <person name="Ring B.Z."/>
            <person name="Ringwald M."/>
            <person name="Rost B."/>
            <person name="Ruan Y."/>
            <person name="Salzberg S.L."/>
            <person name="Sandelin A."/>
            <person name="Schneider C."/>
            <person name="Schoenbach C."/>
            <person name="Sekiguchi K."/>
            <person name="Semple C.A."/>
            <person name="Seno S."/>
            <person name="Sessa L."/>
            <person name="Sheng Y."/>
            <person name="Shibata Y."/>
            <person name="Shimada H."/>
            <person name="Shimada K."/>
            <person name="Silva D."/>
            <person name="Sinclair B."/>
            <person name="Sperling S."/>
            <person name="Stupka E."/>
            <person name="Sugiura K."/>
            <person name="Sultana R."/>
            <person name="Takenaka Y."/>
            <person name="Taki K."/>
            <person name="Tammoja K."/>
            <person name="Tan S.L."/>
            <person name="Tang S."/>
            <person name="Taylor M.S."/>
            <person name="Tegner J."/>
            <person name="Teichmann S.A."/>
            <person name="Ueda H.R."/>
            <person name="van Nimwegen E."/>
            <person name="Verardo R."/>
            <person name="Wei C.L."/>
            <person name="Yagi K."/>
            <person name="Yamanishi H."/>
            <person name="Zabarovsky E."/>
            <person name="Zhu S."/>
            <person name="Zimmer A."/>
            <person name="Hide W."/>
            <person name="Bult C."/>
            <person name="Grimmond S.M."/>
            <person name="Teasdale R.D."/>
            <person name="Liu E.T."/>
            <person name="Brusic V."/>
            <person name="Quackenbush J."/>
            <person name="Wahlestedt C."/>
            <person name="Mattick J.S."/>
            <person name="Hume D.A."/>
            <person name="Kai C."/>
            <person name="Sasaki D."/>
            <person name="Tomaru Y."/>
            <person name="Fukuda S."/>
            <person name="Kanamori-Katayama M."/>
            <person name="Suzuki M."/>
            <person name="Aoki J."/>
            <person name="Arakawa T."/>
            <person name="Iida J."/>
            <person name="Imamura K."/>
            <person name="Itoh M."/>
            <person name="Kato T."/>
            <person name="Kawaji H."/>
            <person name="Kawagashira N."/>
            <person name="Kawashima T."/>
            <person name="Kojima M."/>
            <person name="Kondo S."/>
            <person name="Konno H."/>
            <person name="Nakano K."/>
            <person name="Ninomiya N."/>
            <person name="Nishio T."/>
            <person name="Okada M."/>
            <person name="Plessy C."/>
            <person name="Shibata K."/>
            <person name="Shiraki T."/>
            <person name="Suzuki S."/>
            <person name="Tagami M."/>
            <person name="Waki K."/>
            <person name="Watahiki A."/>
            <person name="Okamura-Oho Y."/>
            <person name="Suzuki H."/>
            <person name="Kawai J."/>
            <person name="Hayashizaki Y."/>
        </authorList>
    </citation>
    <scope>NUCLEOTIDE SEQUENCE [LARGE SCALE MRNA]</scope>
    <source>
        <strain>C57BL/6J</strain>
        <tissue>Corpora quadrigemina</tissue>
    </source>
</reference>
<reference key="3">
    <citation type="journal article" date="2004" name="Genome Res.">
        <title>The status, quality, and expansion of the NIH full-length cDNA project: the Mammalian Gene Collection (MGC).</title>
        <authorList>
            <consortium name="The MGC Project Team"/>
        </authorList>
    </citation>
    <scope>NUCLEOTIDE SEQUENCE [LARGE SCALE MRNA]</scope>
    <source>
        <tissue>Eye</tissue>
    </source>
</reference>
<reference key="4">
    <citation type="journal article" date="2002" name="J. Biol. Chem.">
        <title>Molecular cloning and functional identification of mouse vesicular glutamate transporter 3 and its expression in subsets of novel excitatory neurons.</title>
        <authorList>
            <person name="Schaefer M.K.-H."/>
            <person name="Varoqui H."/>
            <person name="Defamie N."/>
            <person name="Weihe E."/>
            <person name="Erickson J.D."/>
        </authorList>
    </citation>
    <scope>DEVELOPMENTAL STAGE</scope>
</reference>
<reference key="5">
    <citation type="journal article" date="2004" name="Proc. Natl. Acad. Sci. U.S.A.">
        <title>An essential role for vesicular glutamate transporter 1 (VGLUT1) in postnatal development and control of quantal size.</title>
        <authorList>
            <person name="Wojcik S.M."/>
            <person name="Rhee J.S."/>
            <person name="Herzog E."/>
            <person name="Sigler A."/>
            <person name="Jahn R."/>
            <person name="Takamori S."/>
            <person name="Brose N."/>
            <person name="Rosenmund C."/>
        </authorList>
    </citation>
    <scope>SUBCELLULAR LOCATION</scope>
    <scope>TISSUE SPECIFICITY</scope>
</reference>
<reference key="6">
    <citation type="journal article" date="2004" name="Science">
        <title>Vesicular glutamate transporters 1 and 2 target to functionally distinct synaptic release sites.</title>
        <authorList>
            <person name="Fremeau R.T. Jr."/>
            <person name="Kam K."/>
            <person name="Qureshi T."/>
            <person name="Johnson J."/>
            <person name="Copenhagen D.R."/>
            <person name="Storm-Mathisen J."/>
            <person name="Chaudhry F.A."/>
            <person name="Nicoll R.A."/>
            <person name="Edwards R.H."/>
        </authorList>
    </citation>
    <scope>TISSUE SPECIFICITY</scope>
    <scope>DEVELOPMENTAL STAGE</scope>
</reference>
<reference key="7">
    <citation type="journal article" date="2006" name="J. Neurochem.">
        <title>Synaptic and vesicular co-localization of the glutamate transporters VGLUT1 and VGLUT2 in the mouse hippocampus.</title>
        <authorList>
            <person name="Herzog E."/>
            <person name="Takamori S."/>
            <person name="Jahn R."/>
            <person name="Brose N."/>
            <person name="Wojcik S.M."/>
        </authorList>
    </citation>
    <scope>SUBCELLULAR LOCATION</scope>
    <scope>TISSUE SPECIFICITY</scope>
</reference>
<reference key="8">
    <citation type="journal article" date="2006" name="J. Neurosci.">
        <title>Vesicular glutamate transporter VGLUT2 expression levels control quantal size and neuropathic pain.</title>
        <authorList>
            <person name="Moechars D."/>
            <person name="Weston M.C."/>
            <person name="Leo S."/>
            <person name="Callaerts-Vegh Z."/>
            <person name="Goris I."/>
            <person name="Daneels G."/>
            <person name="Buist A."/>
            <person name="Cik M."/>
            <person name="van der Spek P."/>
            <person name="Kass S."/>
            <person name="Meert T."/>
            <person name="D'Hooge R."/>
            <person name="Rosenmund C."/>
            <person name="Hampson R.M."/>
        </authorList>
    </citation>
    <scope>FUNCTION</scope>
    <scope>DISRUPTION PHENOTYPE</scope>
</reference>
<reference key="9">
    <citation type="journal article" date="2010" name="Cell">
        <title>A tissue-specific atlas of mouse protein phosphorylation and expression.</title>
        <authorList>
            <person name="Huttlin E.L."/>
            <person name="Jedrychowski M.P."/>
            <person name="Elias J.E."/>
            <person name="Goswami T."/>
            <person name="Rad R."/>
            <person name="Beausoleil S.A."/>
            <person name="Villen J."/>
            <person name="Haas W."/>
            <person name="Sowa M.E."/>
            <person name="Gygi S.P."/>
        </authorList>
    </citation>
    <scope>IDENTIFICATION BY MASS SPECTROMETRY [LARGE SCALE ANALYSIS]</scope>
    <source>
        <tissue>Brain</tissue>
    </source>
</reference>
<reference key="10">
    <citation type="journal article" date="2014" name="Neuron">
        <title>Vesicular glutamate transporters use flexible anion and cation binding sites for efficient accumulation of neurotransmitter.</title>
        <authorList>
            <person name="Preobraschenski J."/>
            <person name="Zander J.F."/>
            <person name="Suzuki T."/>
            <person name="Ahnert-Hilger G."/>
            <person name="Jahn R."/>
        </authorList>
    </citation>
    <scope>FUNCTION</scope>
    <scope>TRANSPORTER ACTIVITY</scope>
</reference>
<reference key="11">
    <citation type="journal article" date="2019" name="Nat. Cell Biol.">
        <title>An opsin 5-dopamine pathway mediates light-dependent vascular development in the eye.</title>
        <authorList>
            <person name="Nguyen M.T."/>
            <person name="Vemaraju S."/>
            <person name="Nayak G."/>
            <person name="Odaka Y."/>
            <person name="Buhr E.D."/>
            <person name="Alonzo N."/>
            <person name="Tran U."/>
            <person name="Batie M."/>
            <person name="Upton B.A."/>
            <person name="Darvas M."/>
            <person name="Kozmik Z."/>
            <person name="Rao S."/>
            <person name="Hegde R.S."/>
            <person name="Iuvone P.M."/>
            <person name="Van Gelder R.N."/>
            <person name="Lang R.A."/>
        </authorList>
    </citation>
    <scope>FUNCTION</scope>
    <scope>DISRUPTION PHENOTYPE</scope>
</reference>
<reference key="12">
    <citation type="journal article" date="2021" name="Cell Rep.">
        <title>Vesicular Glutamate Transporters (SLCA17 A6, 7, 8) Control Synaptic Phosphate Levels.</title>
        <authorList>
            <person name="Cheret C."/>
            <person name="Ganzella M."/>
            <person name="Preobraschenski J."/>
            <person name="Jahn R."/>
            <person name="Ahnert-Hilger G."/>
        </authorList>
    </citation>
    <scope>FUNCTION</scope>
    <scope>TRANSPORTER ACTIVITY</scope>
</reference>
<comment type="function">
    <text evidence="1 4 9 10 11 12">Multifunctional transporter that transports L-glutamate as well as multiple ions such as chloride, proton, potassium, sodium and phosphate (PubMed:11432869, PubMed:17108179, PubMed:25433636, PubMed:33440152). At the synaptic vesicle membrane, mainly functions as a uniporter which transports preferentially L-glutamate but also, phosphate from the cytoplasm into synaptic vesicles at presynaptic nerve terminals of excitatory neural cells (PubMed:11432869, PubMed:17108179). The L-glutamate or phosphate uniporter activity is electrogenic and is driven by the proton electrochemical gradient, mainly by the electrical gradient established by the vacuolar H(+)-ATPase across the synaptic vesicle membrane (PubMed:11432869). In addition, functions as a chloride channel that allows a chloride permeation through the synaptic vesicle membrane therefore affects the proton electrochemical gradient and promotes synaptic vesicles acidification (By similarity). Moreover, functions as a vesicular K(+)/H(+) antiport allowing to maintain the electrical gradient and to decrease chemical gradient and therefore sustain vesicular glutamate uptake (PubMed:25433636). The vesicular H(+)/H(+) antiport activity is electroneutral (PubMed:25433636). At the plasma membrane, following exocytosis, functions as a symporter of Na(+) and phosphate from the extracellular space to the cytoplasm allowing synaptic phosphate homeostasis regulation (PubMed:33440152). The symporter activity is driven by an inside negative membrane potential and is electrogenic (PubMed:33440152). Also involved in the regulation of retinal hyaloid vessel regression during postnatal development (PubMed:30936473). May also play a role in the endocrine glutamatergic system of other tissues such as pineal gland and pancreas (By similarity).</text>
</comment>
<comment type="catalytic activity">
    <reaction evidence="4">
        <text>L-glutamate(out) = L-glutamate(in)</text>
        <dbReference type="Rhea" id="RHEA:66336"/>
        <dbReference type="ChEBI" id="CHEBI:29985"/>
    </reaction>
</comment>
<comment type="catalytic activity">
    <reaction evidence="10">
        <text>K(+)(in) + H(+)(out) = K(+)(out) + H(+)(in)</text>
        <dbReference type="Rhea" id="RHEA:29467"/>
        <dbReference type="ChEBI" id="CHEBI:15378"/>
        <dbReference type="ChEBI" id="CHEBI:29103"/>
    </reaction>
</comment>
<comment type="catalytic activity">
    <reaction evidence="12">
        <text>3 Na(+)(out) + phosphate(out) = 3 Na(+)(in) + phosphate(in)</text>
        <dbReference type="Rhea" id="RHEA:71255"/>
        <dbReference type="ChEBI" id="CHEBI:29101"/>
        <dbReference type="ChEBI" id="CHEBI:43474"/>
    </reaction>
</comment>
<comment type="catalytic activity">
    <reaction evidence="1">
        <text>phosphate(in) = phosphate(out)</text>
        <dbReference type="Rhea" id="RHEA:32823"/>
        <dbReference type="ChEBI" id="CHEBI:43474"/>
    </reaction>
</comment>
<comment type="catalytic activity">
    <reaction evidence="1">
        <text>chloride(in) = chloride(out)</text>
        <dbReference type="Rhea" id="RHEA:29823"/>
        <dbReference type="ChEBI" id="CHEBI:17996"/>
    </reaction>
</comment>
<comment type="activity regulation">
    <text evidence="1 4">Chloride channel activity is allosterically activated by lumenal H(+) and Cl(-) leading to synaptic vesicles acidification. The L-glutamate transport activity is allosterically activated by lumenal H(+) and Cl(-). The allosteric requirement for H(+) efficiently prevents non-vesicular efflux across the plasma membrane (By similarity). The L-glutamate uniporter activity exhibits a biphasic dependence on chloride concentration (PubMed:11432869).</text>
</comment>
<comment type="biophysicochemical properties">
    <kinetics>
        <KM evidence="4">1.2 mM for L-glutamate</KM>
        <KM evidence="4">1.1 mM for L-glutamate</KM>
        <Vmax evidence="4">1405.0 pmol/min/mg enzyme toward L-glutamate</Vmax>
        <Vmax evidence="4">1219.0 pmol/min/mg enzyme toward L-glutamate</Vmax>
    </kinetics>
    <phDependence>
        <text evidence="4">Optimum pH is 7.5.</text>
    </phDependence>
</comment>
<comment type="subcellular location">
    <subcellularLocation>
        <location evidence="6 8">Cytoplasmic vesicle</location>
        <location evidence="6 8">Secretory vesicle</location>
        <location evidence="6 8">Synaptic vesicle membrane</location>
        <topology evidence="3">Multi-pass membrane protein</topology>
    </subcellularLocation>
    <subcellularLocation>
        <location evidence="8">Synapse</location>
        <location evidence="8">Synaptosome</location>
    </subcellularLocation>
    <subcellularLocation>
        <location evidence="15">Cell membrane</location>
        <topology evidence="3">Multi-pass membrane protein</topology>
    </subcellularLocation>
</comment>
<comment type="tissue specificity">
    <text evidence="4 6 7 8">Expressed in brain. Expressed in hippocampal neurons (at protein level).</text>
</comment>
<comment type="developmental stage">
    <text evidence="5 7">Expressed in brain throughout development. Transiently expressed in hippocampal neurons during the first week after birth, with expression decreasing thereafter.</text>
</comment>
<comment type="disruption phenotype">
    <text evidence="9 11">Mice exhibit an elevated rate of perinatal lethality (PubMed:17108179). Surviving animals display a strong reduction in evoked glutamergic responses in thalamic neurons (PubMed:17108179). Reduction of protein level in homozygous and heterozygous knockouts leads to a graded reduction in the amplitude of the postsynaptic response to single vesicle fusion in thalamic neurons, consistent with a role for this protein in determining quantal size (PubMed:17108179). Decrease in the number of retinal hyaloid vessels at postnatal day 8 as a result of precocious regression (PubMed:30936473).</text>
</comment>
<comment type="similarity">
    <text evidence="14">Belongs to the major facilitator superfamily. Sodium/anion cotransporter family. VGLUT subfamily.</text>
</comment>
<comment type="caution">
    <text evidence="14">The phosphorylation site Tyr-195 is located in a predicted transmembrane region.</text>
</comment>
<accession>Q8BLE7</accession>
<accession>Q920B7</accession>
<feature type="chain" id="PRO_0000318170" description="Vesicular glutamate transporter 2">
    <location>
        <begin position="1"/>
        <end position="582"/>
    </location>
</feature>
<feature type="topological domain" description="Cytoplasmic" evidence="3">
    <location>
        <begin position="1"/>
        <end position="71"/>
    </location>
</feature>
<feature type="transmembrane region" description="Helical" evidence="3">
    <location>
        <begin position="72"/>
        <end position="92"/>
    </location>
</feature>
<feature type="topological domain" description="Vesicular" evidence="3">
    <location>
        <begin position="93"/>
        <end position="125"/>
    </location>
</feature>
<feature type="transmembrane region" description="Helical" evidence="3">
    <location>
        <begin position="126"/>
        <end position="146"/>
    </location>
</feature>
<feature type="topological domain" description="Cytoplasmic" evidence="3">
    <location>
        <begin position="147"/>
        <end position="148"/>
    </location>
</feature>
<feature type="transmembrane region" description="Helical" evidence="3">
    <location>
        <begin position="149"/>
        <end position="169"/>
    </location>
</feature>
<feature type="topological domain" description="Vesicular" evidence="3">
    <location>
        <begin position="170"/>
        <end position="177"/>
    </location>
</feature>
<feature type="transmembrane region" description="Helical" evidence="3">
    <location>
        <begin position="178"/>
        <end position="198"/>
    </location>
</feature>
<feature type="topological domain" description="Cytoplasmic" evidence="3">
    <location>
        <begin position="199"/>
        <end position="216"/>
    </location>
</feature>
<feature type="transmembrane region" description="Helical" evidence="3">
    <location>
        <begin position="217"/>
        <end position="237"/>
    </location>
</feature>
<feature type="topological domain" description="Vesicular" evidence="3">
    <location>
        <begin position="238"/>
        <end position="244"/>
    </location>
</feature>
<feature type="transmembrane region" description="Helical" evidence="3">
    <location>
        <begin position="245"/>
        <end position="265"/>
    </location>
</feature>
<feature type="topological domain" description="Cytoplasmic" evidence="3">
    <location>
        <begin position="266"/>
        <end position="310"/>
    </location>
</feature>
<feature type="transmembrane region" description="Helical" evidence="3">
    <location>
        <begin position="311"/>
        <end position="331"/>
    </location>
</feature>
<feature type="topological domain" description="Vesicular" evidence="3">
    <location>
        <begin position="332"/>
        <end position="349"/>
    </location>
</feature>
<feature type="transmembrane region" description="Helical" evidence="3">
    <location>
        <begin position="350"/>
        <end position="370"/>
    </location>
</feature>
<feature type="topological domain" description="Cytoplasmic" evidence="3">
    <location>
        <begin position="371"/>
        <end position="386"/>
    </location>
</feature>
<feature type="transmembrane region" description="Helical" evidence="3">
    <location>
        <begin position="387"/>
        <end position="407"/>
    </location>
</feature>
<feature type="topological domain" description="Vesicular" evidence="3">
    <location>
        <begin position="408"/>
        <end position="409"/>
    </location>
</feature>
<feature type="transmembrane region" description="Helical" evidence="3">
    <location>
        <begin position="410"/>
        <end position="430"/>
    </location>
</feature>
<feature type="topological domain" description="Cytoplasmic" evidence="3">
    <location>
        <begin position="431"/>
        <end position="443"/>
    </location>
</feature>
<feature type="transmembrane region" description="Helical" evidence="3">
    <location>
        <begin position="444"/>
        <end position="464"/>
    </location>
</feature>
<feature type="topological domain" description="Vesicular" evidence="3">
    <location>
        <begin position="465"/>
        <end position="477"/>
    </location>
</feature>
<feature type="transmembrane region" description="Helical" evidence="3">
    <location>
        <begin position="478"/>
        <end position="498"/>
    </location>
</feature>
<feature type="topological domain" description="Cytoplasmic" evidence="3">
    <location>
        <begin position="499"/>
        <end position="582"/>
    </location>
</feature>
<feature type="glycosylation site" description="N-linked (GlcNAc...) asparagine" evidence="3">
    <location>
        <position position="100"/>
    </location>
</feature>
<feature type="glycosylation site" description="N-linked (GlcNAc...) asparagine" evidence="3">
    <location>
        <position position="101"/>
    </location>
</feature>
<feature type="glycosylation site" description="N-linked (GlcNAc...) asparagine" evidence="3">
    <location>
        <position position="470"/>
    </location>
</feature>
<protein>
    <recommendedName>
        <fullName evidence="2">Vesicular glutamate transporter 2</fullName>
        <shortName evidence="13">VGluT2</shortName>
    </recommendedName>
    <alternativeName>
        <fullName evidence="2">Differentiation-associated BNPI</fullName>
    </alternativeName>
    <alternativeName>
        <fullName evidence="2">Differentiation-associated Na(+)-dependent inorganic phosphate cotransporter</fullName>
    </alternativeName>
    <alternativeName>
        <fullName>Solute carrier family 17 member 6</fullName>
    </alternativeName>
</protein>
<evidence type="ECO:0000250" key="1">
    <source>
        <dbReference type="UniProtKB" id="Q9JI12"/>
    </source>
</evidence>
<evidence type="ECO:0000250" key="2">
    <source>
        <dbReference type="UniProtKB" id="Q9P2U8"/>
    </source>
</evidence>
<evidence type="ECO:0000255" key="3"/>
<evidence type="ECO:0000269" key="4">
    <source>
    </source>
</evidence>
<evidence type="ECO:0000269" key="5">
    <source>
    </source>
</evidence>
<evidence type="ECO:0000269" key="6">
    <source>
    </source>
</evidence>
<evidence type="ECO:0000269" key="7">
    <source>
    </source>
</evidence>
<evidence type="ECO:0000269" key="8">
    <source>
    </source>
</evidence>
<evidence type="ECO:0000269" key="9">
    <source>
    </source>
</evidence>
<evidence type="ECO:0000269" key="10">
    <source>
    </source>
</evidence>
<evidence type="ECO:0000269" key="11">
    <source>
    </source>
</evidence>
<evidence type="ECO:0000269" key="12">
    <source>
    </source>
</evidence>
<evidence type="ECO:0000303" key="13">
    <source>
    </source>
</evidence>
<evidence type="ECO:0000305" key="14"/>
<evidence type="ECO:0000305" key="15">
    <source>
    </source>
</evidence>
<evidence type="ECO:0000312" key="16">
    <source>
        <dbReference type="MGI" id="MGI:2156052"/>
    </source>
</evidence>
<name>VGLU2_MOUSE</name>
<proteinExistence type="evidence at protein level"/>
<keyword id="KW-0050">Antiport</keyword>
<keyword id="KW-1003">Cell membrane</keyword>
<keyword id="KW-0868">Chloride</keyword>
<keyword id="KW-0869">Chloride channel</keyword>
<keyword id="KW-0968">Cytoplasmic vesicle</keyword>
<keyword id="KW-0325">Glycoprotein</keyword>
<keyword id="KW-0407">Ion channel</keyword>
<keyword id="KW-0406">Ion transport</keyword>
<keyword id="KW-0472">Membrane</keyword>
<keyword id="KW-0532">Neurotransmitter transport</keyword>
<keyword id="KW-0592">Phosphate transport</keyword>
<keyword id="KW-1185">Reference proteome</keyword>
<keyword id="KW-0915">Sodium</keyword>
<keyword id="KW-0739">Sodium transport</keyword>
<keyword id="KW-0769">Symport</keyword>
<keyword id="KW-0770">Synapse</keyword>
<keyword id="KW-0771">Synaptosome</keyword>
<keyword id="KW-0812">Transmembrane</keyword>
<keyword id="KW-1133">Transmembrane helix</keyword>
<keyword id="KW-0813">Transport</keyword>
<organism>
    <name type="scientific">Mus musculus</name>
    <name type="common">Mouse</name>
    <dbReference type="NCBI Taxonomy" id="10090"/>
    <lineage>
        <taxon>Eukaryota</taxon>
        <taxon>Metazoa</taxon>
        <taxon>Chordata</taxon>
        <taxon>Craniata</taxon>
        <taxon>Vertebrata</taxon>
        <taxon>Euteleostomi</taxon>
        <taxon>Mammalia</taxon>
        <taxon>Eutheria</taxon>
        <taxon>Euarchontoglires</taxon>
        <taxon>Glires</taxon>
        <taxon>Rodentia</taxon>
        <taxon>Myomorpha</taxon>
        <taxon>Muroidea</taxon>
        <taxon>Muridae</taxon>
        <taxon>Murinae</taxon>
        <taxon>Mus</taxon>
        <taxon>Mus</taxon>
    </lineage>
</organism>
<dbReference type="EMBL" id="AF324864">
    <property type="protein sequence ID" value="AAL08941.1"/>
    <property type="molecule type" value="mRNA"/>
</dbReference>
<dbReference type="EMBL" id="AK045409">
    <property type="protein sequence ID" value="BAC32349.1"/>
    <property type="molecule type" value="mRNA"/>
</dbReference>
<dbReference type="EMBL" id="BC038375">
    <property type="protein sequence ID" value="AAH38375.1"/>
    <property type="molecule type" value="mRNA"/>
</dbReference>
<dbReference type="CCDS" id="CCDS39969.1"/>
<dbReference type="RefSeq" id="NP_543129.3">
    <property type="nucleotide sequence ID" value="NM_080853.3"/>
</dbReference>
<dbReference type="SMR" id="Q8BLE7"/>
<dbReference type="BioGRID" id="228333">
    <property type="interactions" value="3"/>
</dbReference>
<dbReference type="FunCoup" id="Q8BLE7">
    <property type="interactions" value="389"/>
</dbReference>
<dbReference type="IntAct" id="Q8BLE7">
    <property type="interactions" value="2"/>
</dbReference>
<dbReference type="MINT" id="Q8BLE7"/>
<dbReference type="STRING" id="10090.ENSMUSP00000032710"/>
<dbReference type="GlyCosmos" id="Q8BLE7">
    <property type="glycosylation" value="3 sites, No reported glycans"/>
</dbReference>
<dbReference type="GlyGen" id="Q8BLE7">
    <property type="glycosylation" value="3 sites, 1 N-linked glycan (2 sites)"/>
</dbReference>
<dbReference type="iPTMnet" id="Q8BLE7"/>
<dbReference type="PhosphoSitePlus" id="Q8BLE7"/>
<dbReference type="SwissPalm" id="Q8BLE7"/>
<dbReference type="PaxDb" id="10090-ENSMUSP00000032710"/>
<dbReference type="PeptideAtlas" id="Q8BLE7"/>
<dbReference type="ProteomicsDB" id="297882"/>
<dbReference type="ABCD" id="Q8BLE7">
    <property type="antibodies" value="1 sequenced antibody"/>
</dbReference>
<dbReference type="DNASU" id="140919"/>
<dbReference type="GeneID" id="140919"/>
<dbReference type="KEGG" id="mmu:140919"/>
<dbReference type="UCSC" id="uc009hcf.2">
    <property type="organism name" value="mouse"/>
</dbReference>
<dbReference type="AGR" id="MGI:2156052"/>
<dbReference type="CTD" id="57084"/>
<dbReference type="MGI" id="MGI:2156052">
    <property type="gene designation" value="Slc17a6"/>
</dbReference>
<dbReference type="eggNOG" id="KOG2532">
    <property type="taxonomic scope" value="Eukaryota"/>
</dbReference>
<dbReference type="InParanoid" id="Q8BLE7"/>
<dbReference type="OrthoDB" id="2985014at2759"/>
<dbReference type="PhylomeDB" id="Q8BLE7"/>
<dbReference type="TreeFam" id="TF313535"/>
<dbReference type="Reactome" id="R-MMU-428643">
    <property type="pathway name" value="Organic anion transporters"/>
</dbReference>
<dbReference type="SABIO-RK" id="Q8BLE7"/>
<dbReference type="BioGRID-ORCS" id="140919">
    <property type="hits" value="3 hits in 77 CRISPR screens"/>
</dbReference>
<dbReference type="ChiTaRS" id="Slc17a6">
    <property type="organism name" value="mouse"/>
</dbReference>
<dbReference type="PRO" id="PR:Q8BLE7"/>
<dbReference type="Proteomes" id="UP000000589">
    <property type="component" value="Unplaced"/>
</dbReference>
<dbReference type="RNAct" id="Q8BLE7">
    <property type="molecule type" value="protein"/>
</dbReference>
<dbReference type="GO" id="GO:0034707">
    <property type="term" value="C:chloride channel complex"/>
    <property type="evidence" value="ECO:0007669"/>
    <property type="project" value="UniProtKB-KW"/>
</dbReference>
<dbReference type="GO" id="GO:0043005">
    <property type="term" value="C:neuron projection"/>
    <property type="evidence" value="ECO:0000250"/>
    <property type="project" value="UniProtKB"/>
</dbReference>
<dbReference type="GO" id="GO:0005886">
    <property type="term" value="C:plasma membrane"/>
    <property type="evidence" value="ECO:0007669"/>
    <property type="project" value="UniProtKB-SubCell"/>
</dbReference>
<dbReference type="GO" id="GO:0098793">
    <property type="term" value="C:presynapse"/>
    <property type="evidence" value="ECO:0000314"/>
    <property type="project" value="MGI"/>
</dbReference>
<dbReference type="GO" id="GO:0008021">
    <property type="term" value="C:synaptic vesicle"/>
    <property type="evidence" value="ECO:0000314"/>
    <property type="project" value="MGI"/>
</dbReference>
<dbReference type="GO" id="GO:0030672">
    <property type="term" value="C:synaptic vesicle membrane"/>
    <property type="evidence" value="ECO:0000250"/>
    <property type="project" value="UniProtKB"/>
</dbReference>
<dbReference type="GO" id="GO:0005254">
    <property type="term" value="F:chloride channel activity"/>
    <property type="evidence" value="ECO:0000250"/>
    <property type="project" value="UniProtKB"/>
</dbReference>
<dbReference type="GO" id="GO:0140788">
    <property type="term" value="F:L-glutamate uniporter activity"/>
    <property type="evidence" value="ECO:0000314"/>
    <property type="project" value="MGI"/>
</dbReference>
<dbReference type="GO" id="GO:0015386">
    <property type="term" value="F:potassium:proton antiporter activity"/>
    <property type="evidence" value="ECO:0000314"/>
    <property type="project" value="UniProtKB"/>
</dbReference>
<dbReference type="GO" id="GO:0005436">
    <property type="term" value="F:sodium:phosphate symporter activity"/>
    <property type="evidence" value="ECO:0000314"/>
    <property type="project" value="UniProtKB"/>
</dbReference>
<dbReference type="GO" id="GO:1990384">
    <property type="term" value="P:hyaloid vascular plexus regression"/>
    <property type="evidence" value="ECO:0000315"/>
    <property type="project" value="UniProtKB"/>
</dbReference>
<dbReference type="GO" id="GO:0051938">
    <property type="term" value="P:L-glutamate import"/>
    <property type="evidence" value="ECO:0000250"/>
    <property type="project" value="UniProtKB"/>
</dbReference>
<dbReference type="GO" id="GO:0015813">
    <property type="term" value="P:L-glutamate transmembrane transport"/>
    <property type="evidence" value="ECO:0000315"/>
    <property type="project" value="UniProtKB"/>
</dbReference>
<dbReference type="GO" id="GO:0001504">
    <property type="term" value="P:neurotransmitter uptake"/>
    <property type="evidence" value="ECO:0000314"/>
    <property type="project" value="MGI"/>
</dbReference>
<dbReference type="GO" id="GO:0055062">
    <property type="term" value="P:phosphate ion homeostasis"/>
    <property type="evidence" value="ECO:0000314"/>
    <property type="project" value="UniProtKB"/>
</dbReference>
<dbReference type="GO" id="GO:0044341">
    <property type="term" value="P:sodium-dependent phosphate transport"/>
    <property type="evidence" value="ECO:0000314"/>
    <property type="project" value="UniProtKB"/>
</dbReference>
<dbReference type="CDD" id="cd17382">
    <property type="entry name" value="MFS_SLC17A6_7_8_VGluT"/>
    <property type="match status" value="1"/>
</dbReference>
<dbReference type="FunFam" id="1.20.1250.20:FF:000004">
    <property type="entry name" value="vesicular glutamate transporter 2 isoform X1"/>
    <property type="match status" value="1"/>
</dbReference>
<dbReference type="FunFam" id="1.20.1250.20:FF:000005">
    <property type="entry name" value="vesicular glutamate transporter 2 isoform X1"/>
    <property type="match status" value="1"/>
</dbReference>
<dbReference type="Gene3D" id="1.20.1250.20">
    <property type="entry name" value="MFS general substrate transporter like domains"/>
    <property type="match status" value="2"/>
</dbReference>
<dbReference type="InterPro" id="IPR011701">
    <property type="entry name" value="MFS"/>
</dbReference>
<dbReference type="InterPro" id="IPR020846">
    <property type="entry name" value="MFS_dom"/>
</dbReference>
<dbReference type="InterPro" id="IPR050382">
    <property type="entry name" value="MFS_Na/Anion_cotransporter"/>
</dbReference>
<dbReference type="InterPro" id="IPR036259">
    <property type="entry name" value="MFS_trans_sf"/>
</dbReference>
<dbReference type="PANTHER" id="PTHR11662">
    <property type="entry name" value="SOLUTE CARRIER FAMILY 17"/>
    <property type="match status" value="1"/>
</dbReference>
<dbReference type="PANTHER" id="PTHR11662:SF201">
    <property type="entry name" value="VESICULAR GLUTAMATE TRANSPORTER 2"/>
    <property type="match status" value="1"/>
</dbReference>
<dbReference type="Pfam" id="PF07690">
    <property type="entry name" value="MFS_1"/>
    <property type="match status" value="1"/>
</dbReference>
<dbReference type="SUPFAM" id="SSF103473">
    <property type="entry name" value="MFS general substrate transporter"/>
    <property type="match status" value="1"/>
</dbReference>
<dbReference type="PROSITE" id="PS50850">
    <property type="entry name" value="MFS"/>
    <property type="match status" value="1"/>
</dbReference>
<gene>
    <name evidence="16" type="primary">Slc17a6</name>
    <name type="synonym">Dnpi</name>
    <name type="synonym">Vglut2</name>
</gene>